<comment type="function">
    <text evidence="1">Aspartyl-tRNA synthetase with relaxed tRNA specificity since it is able to aspartylate not only its cognate tRNA(Asp) but also tRNA(Asn). Reaction proceeds in two steps: L-aspartate is first activated by ATP to form Asp-AMP and then transferred to the acceptor end of tRNA(Asp/Asn).</text>
</comment>
<comment type="catalytic activity">
    <reaction evidence="1">
        <text>tRNA(Asx) + L-aspartate + ATP = L-aspartyl-tRNA(Asx) + AMP + diphosphate</text>
        <dbReference type="Rhea" id="RHEA:18349"/>
        <dbReference type="Rhea" id="RHEA-COMP:9710"/>
        <dbReference type="Rhea" id="RHEA-COMP:9711"/>
        <dbReference type="ChEBI" id="CHEBI:29991"/>
        <dbReference type="ChEBI" id="CHEBI:30616"/>
        <dbReference type="ChEBI" id="CHEBI:33019"/>
        <dbReference type="ChEBI" id="CHEBI:78442"/>
        <dbReference type="ChEBI" id="CHEBI:78516"/>
        <dbReference type="ChEBI" id="CHEBI:456215"/>
        <dbReference type="EC" id="6.1.1.23"/>
    </reaction>
</comment>
<comment type="subunit">
    <text evidence="1">Homodimer.</text>
</comment>
<comment type="subcellular location">
    <subcellularLocation>
        <location evidence="1">Cytoplasm</location>
    </subcellularLocation>
</comment>
<comment type="similarity">
    <text evidence="1">Belongs to the class-II aminoacyl-tRNA synthetase family. Type 1 subfamily.</text>
</comment>
<feature type="chain" id="PRO_0000110852" description="Aspartate--tRNA(Asp/Asn) ligase">
    <location>
        <begin position="1"/>
        <end position="584"/>
    </location>
</feature>
<feature type="region of interest" description="Aspartate" evidence="1">
    <location>
        <begin position="201"/>
        <end position="204"/>
    </location>
</feature>
<feature type="binding site" evidence="1">
    <location>
        <position position="177"/>
    </location>
    <ligand>
        <name>L-aspartate</name>
        <dbReference type="ChEBI" id="CHEBI:29991"/>
    </ligand>
</feature>
<feature type="binding site" evidence="1">
    <location>
        <begin position="223"/>
        <end position="225"/>
    </location>
    <ligand>
        <name>ATP</name>
        <dbReference type="ChEBI" id="CHEBI:30616"/>
    </ligand>
</feature>
<feature type="binding site" evidence="1">
    <location>
        <position position="223"/>
    </location>
    <ligand>
        <name>L-aspartate</name>
        <dbReference type="ChEBI" id="CHEBI:29991"/>
    </ligand>
</feature>
<feature type="binding site" evidence="1">
    <location>
        <position position="232"/>
    </location>
    <ligand>
        <name>ATP</name>
        <dbReference type="ChEBI" id="CHEBI:30616"/>
    </ligand>
</feature>
<feature type="binding site" evidence="1">
    <location>
        <position position="447"/>
    </location>
    <ligand>
        <name>L-aspartate</name>
        <dbReference type="ChEBI" id="CHEBI:29991"/>
    </ligand>
</feature>
<feature type="binding site" evidence="1">
    <location>
        <position position="481"/>
    </location>
    <ligand>
        <name>ATP</name>
        <dbReference type="ChEBI" id="CHEBI:30616"/>
    </ligand>
</feature>
<feature type="binding site" evidence="1">
    <location>
        <position position="488"/>
    </location>
    <ligand>
        <name>L-aspartate</name>
        <dbReference type="ChEBI" id="CHEBI:29991"/>
    </ligand>
</feature>
<feature type="binding site" evidence="1">
    <location>
        <begin position="533"/>
        <end position="536"/>
    </location>
    <ligand>
        <name>ATP</name>
        <dbReference type="ChEBI" id="CHEBI:30616"/>
    </ligand>
</feature>
<feature type="site" description="Important for tRNA non-discrimination" evidence="1">
    <location>
        <position position="32"/>
    </location>
</feature>
<feature type="site" description="Important for tRNA non-discrimination" evidence="1">
    <location>
        <position position="84"/>
    </location>
</feature>
<feature type="sequence conflict" description="In Ref. 2." evidence="2" ref="2">
    <original>SQRIHNADLQNKI</original>
    <variation>HNVFITQICKIKS</variation>
    <location>
        <begin position="486"/>
        <end position="498"/>
    </location>
</feature>
<sequence length="584" mass="66513">MKYRTHRCNELSLSNVGERVRVSGWVHRYRNHGGVVFIDLRDRFGITQIVCREDEKPELHQLVDSVRSEWVLSVEGTVCRRLEGMENANLATGDIEVEIEKVDILSKAKNLPFSISDDHIHVNEELRLEYRYLDMRRGQILDRLIYRHKVMLACRQYMDKQGFTEVVTPVLGKSTPEGARDYLVPSRIYPGSFYALPQSPQLFKQILMVGGLDRYFQIATCFRDEDLRADRQPEFAQIDIEMSFATPDDLFPIIEQLVVEMFSVQGIKIDLPLPRMTYQEAKDLYGTDKPDLRFGLQLRDCREHAKQFSFSIFLDQLAQGGTIKGFCVPGGADMSRKQLDVYTEFVKRYGAMGLVWIKKQENGLASNVAKFASEEVFDAMFADFSAKDNDILLLIAAPESIANQSLDHLRRLIGKERNLYNESQYNFVWITDFPLFAKEEGKICSEHHPFTSPLDEDISLLDTDPLSVRSSSYDLVLNGYEIASGSQRIHNADLQNKIFSILELSPESIKEKFGFFIDALSFGTPPHLGIALGLDRIMMVLTGAEGIREVIAFPKTQKAADLMMNAPAEIMTSQLKELNIKVTS</sequence>
<dbReference type="EC" id="6.1.1.23" evidence="1"/>
<dbReference type="EMBL" id="AE015925">
    <property type="protein sequence ID" value="AAP04829.1"/>
    <property type="molecule type" value="Genomic_DNA"/>
</dbReference>
<dbReference type="EMBL" id="L39892">
    <property type="protein sequence ID" value="AAB41345.1"/>
    <property type="molecule type" value="Genomic_DNA"/>
</dbReference>
<dbReference type="RefSeq" id="WP_011006050.1">
    <property type="nucleotide sequence ID" value="NC_003361.3"/>
</dbReference>
<dbReference type="SMR" id="Q46175"/>
<dbReference type="STRING" id="227941.CCA_00077"/>
<dbReference type="KEGG" id="cca:CCA_00077"/>
<dbReference type="eggNOG" id="COG0173">
    <property type="taxonomic scope" value="Bacteria"/>
</dbReference>
<dbReference type="HOGENOM" id="CLU_014330_3_2_0"/>
<dbReference type="OrthoDB" id="9802326at2"/>
<dbReference type="Proteomes" id="UP000002193">
    <property type="component" value="Chromosome"/>
</dbReference>
<dbReference type="GO" id="GO:0005737">
    <property type="term" value="C:cytoplasm"/>
    <property type="evidence" value="ECO:0007669"/>
    <property type="project" value="UniProtKB-SubCell"/>
</dbReference>
<dbReference type="GO" id="GO:0004815">
    <property type="term" value="F:aspartate-tRNA ligase activity"/>
    <property type="evidence" value="ECO:0007669"/>
    <property type="project" value="UniProtKB-UniRule"/>
</dbReference>
<dbReference type="GO" id="GO:0050560">
    <property type="term" value="F:aspartate-tRNA(Asn) ligase activity"/>
    <property type="evidence" value="ECO:0007669"/>
    <property type="project" value="UniProtKB-EC"/>
</dbReference>
<dbReference type="GO" id="GO:0005524">
    <property type="term" value="F:ATP binding"/>
    <property type="evidence" value="ECO:0007669"/>
    <property type="project" value="UniProtKB-UniRule"/>
</dbReference>
<dbReference type="GO" id="GO:0003676">
    <property type="term" value="F:nucleic acid binding"/>
    <property type="evidence" value="ECO:0007669"/>
    <property type="project" value="InterPro"/>
</dbReference>
<dbReference type="GO" id="GO:0006422">
    <property type="term" value="P:aspartyl-tRNA aminoacylation"/>
    <property type="evidence" value="ECO:0007669"/>
    <property type="project" value="UniProtKB-UniRule"/>
</dbReference>
<dbReference type="CDD" id="cd00777">
    <property type="entry name" value="AspRS_core"/>
    <property type="match status" value="1"/>
</dbReference>
<dbReference type="CDD" id="cd04317">
    <property type="entry name" value="EcAspRS_like_N"/>
    <property type="match status" value="1"/>
</dbReference>
<dbReference type="Gene3D" id="3.30.930.10">
    <property type="entry name" value="Bira Bifunctional Protein, Domain 2"/>
    <property type="match status" value="1"/>
</dbReference>
<dbReference type="Gene3D" id="3.30.1360.30">
    <property type="entry name" value="GAD-like domain"/>
    <property type="match status" value="1"/>
</dbReference>
<dbReference type="Gene3D" id="2.40.50.140">
    <property type="entry name" value="Nucleic acid-binding proteins"/>
    <property type="match status" value="1"/>
</dbReference>
<dbReference type="HAMAP" id="MF_00044">
    <property type="entry name" value="Asp_tRNA_synth_type1"/>
    <property type="match status" value="1"/>
</dbReference>
<dbReference type="InterPro" id="IPR004364">
    <property type="entry name" value="Aa-tRNA-synt_II"/>
</dbReference>
<dbReference type="InterPro" id="IPR006195">
    <property type="entry name" value="aa-tRNA-synth_II"/>
</dbReference>
<dbReference type="InterPro" id="IPR045864">
    <property type="entry name" value="aa-tRNA-synth_II/BPL/LPL"/>
</dbReference>
<dbReference type="InterPro" id="IPR004524">
    <property type="entry name" value="Asp-tRNA-ligase_1"/>
</dbReference>
<dbReference type="InterPro" id="IPR047089">
    <property type="entry name" value="Asp-tRNA-ligase_1_N"/>
</dbReference>
<dbReference type="InterPro" id="IPR002312">
    <property type="entry name" value="Asp/Asn-tRNA-synth_IIb"/>
</dbReference>
<dbReference type="InterPro" id="IPR047090">
    <property type="entry name" value="AspRS_core"/>
</dbReference>
<dbReference type="InterPro" id="IPR004115">
    <property type="entry name" value="GAD-like_sf"/>
</dbReference>
<dbReference type="InterPro" id="IPR029351">
    <property type="entry name" value="GAD_dom"/>
</dbReference>
<dbReference type="InterPro" id="IPR012340">
    <property type="entry name" value="NA-bd_OB-fold"/>
</dbReference>
<dbReference type="InterPro" id="IPR004365">
    <property type="entry name" value="NA-bd_OB_tRNA"/>
</dbReference>
<dbReference type="NCBIfam" id="TIGR00459">
    <property type="entry name" value="aspS_bact"/>
    <property type="match status" value="1"/>
</dbReference>
<dbReference type="NCBIfam" id="NF001750">
    <property type="entry name" value="PRK00476.1"/>
    <property type="match status" value="1"/>
</dbReference>
<dbReference type="PANTHER" id="PTHR22594:SF5">
    <property type="entry name" value="ASPARTATE--TRNA LIGASE, MITOCHONDRIAL"/>
    <property type="match status" value="1"/>
</dbReference>
<dbReference type="PANTHER" id="PTHR22594">
    <property type="entry name" value="ASPARTYL/LYSYL-TRNA SYNTHETASE"/>
    <property type="match status" value="1"/>
</dbReference>
<dbReference type="Pfam" id="PF02938">
    <property type="entry name" value="GAD"/>
    <property type="match status" value="1"/>
</dbReference>
<dbReference type="Pfam" id="PF00152">
    <property type="entry name" value="tRNA-synt_2"/>
    <property type="match status" value="1"/>
</dbReference>
<dbReference type="Pfam" id="PF01336">
    <property type="entry name" value="tRNA_anti-codon"/>
    <property type="match status" value="1"/>
</dbReference>
<dbReference type="PRINTS" id="PR01042">
    <property type="entry name" value="TRNASYNTHASP"/>
</dbReference>
<dbReference type="SUPFAM" id="SSF55681">
    <property type="entry name" value="Class II aaRS and biotin synthetases"/>
    <property type="match status" value="1"/>
</dbReference>
<dbReference type="SUPFAM" id="SSF55261">
    <property type="entry name" value="GAD domain-like"/>
    <property type="match status" value="1"/>
</dbReference>
<dbReference type="SUPFAM" id="SSF50249">
    <property type="entry name" value="Nucleic acid-binding proteins"/>
    <property type="match status" value="1"/>
</dbReference>
<dbReference type="PROSITE" id="PS50862">
    <property type="entry name" value="AA_TRNA_LIGASE_II"/>
    <property type="match status" value="1"/>
</dbReference>
<evidence type="ECO:0000255" key="1">
    <source>
        <dbReference type="HAMAP-Rule" id="MF_00044"/>
    </source>
</evidence>
<evidence type="ECO:0000305" key="2"/>
<protein>
    <recommendedName>
        <fullName evidence="1">Aspartate--tRNA(Asp/Asn) ligase</fullName>
        <ecNumber evidence="1">6.1.1.23</ecNumber>
    </recommendedName>
    <alternativeName>
        <fullName evidence="1">Aspartyl-tRNA synthetase</fullName>
        <shortName evidence="1">AspRS</shortName>
    </alternativeName>
    <alternativeName>
        <fullName evidence="1">Non-discriminating aspartyl-tRNA synthetase</fullName>
        <shortName evidence="1">ND-AspRS</shortName>
    </alternativeName>
</protein>
<proteinExistence type="inferred from homology"/>
<reference key="1">
    <citation type="journal article" date="2003" name="Nucleic Acids Res.">
        <title>Genome sequence of Chlamydophila caviae (Chlamydia psittaci GPIC): examining the role of niche-specific genes in the evolution of the Chlamydiaceae.</title>
        <authorList>
            <person name="Read T.D."/>
            <person name="Myers G.S.A."/>
            <person name="Brunham R.C."/>
            <person name="Nelson W.C."/>
            <person name="Paulsen I.T."/>
            <person name="Heidelberg J.F."/>
            <person name="Holtzapple E.K."/>
            <person name="Khouri H.M."/>
            <person name="Federova N.B."/>
            <person name="Carty H.A."/>
            <person name="Umayam L.A."/>
            <person name="Haft D.H."/>
            <person name="Peterson J.D."/>
            <person name="Beanan M.J."/>
            <person name="White O."/>
            <person name="Salzberg S.L."/>
            <person name="Hsia R.-C."/>
            <person name="McClarty G."/>
            <person name="Rank R.G."/>
            <person name="Bavoil P.M."/>
            <person name="Fraser C.M."/>
        </authorList>
    </citation>
    <scope>NUCLEOTIDE SEQUENCE [LARGE SCALE GENOMIC DNA]</scope>
    <source>
        <strain>ATCC VR-813 / DSM 19441 / 03DC25 / GPIC</strain>
    </source>
</reference>
<reference key="2">
    <citation type="journal article" date="1996" name="Microbiology">
        <title>A 28 kDa major immunogen of Chlamydia psittaci shares identity with Mip proteins of Legionella spp. and Chlamydia trachomatis-cloning and characterization of the C. psittaci mip-like gene.</title>
        <authorList>
            <person name="Rockey D.D."/>
            <person name="Chesebro B.B."/>
            <person name="Heinzen R.A."/>
            <person name="Hackstadt T."/>
        </authorList>
    </citation>
    <scope>NUCLEOTIDE SEQUENCE [GENOMIC DNA] OF 486-584</scope>
    <source>
        <strain>ATCC VR-813 / DSM 19441 / 03DC25 / GPIC</strain>
    </source>
</reference>
<organism>
    <name type="scientific">Chlamydia caviae (strain ATCC VR-813 / DSM 19441 / 03DC25 / GPIC)</name>
    <name type="common">Chlamydophila caviae</name>
    <dbReference type="NCBI Taxonomy" id="227941"/>
    <lineage>
        <taxon>Bacteria</taxon>
        <taxon>Pseudomonadati</taxon>
        <taxon>Chlamydiota</taxon>
        <taxon>Chlamydiia</taxon>
        <taxon>Chlamydiales</taxon>
        <taxon>Chlamydiaceae</taxon>
        <taxon>Chlamydia/Chlamydophila group</taxon>
        <taxon>Chlamydia</taxon>
    </lineage>
</organism>
<keyword id="KW-0030">Aminoacyl-tRNA synthetase</keyword>
<keyword id="KW-0067">ATP-binding</keyword>
<keyword id="KW-0963">Cytoplasm</keyword>
<keyword id="KW-0436">Ligase</keyword>
<keyword id="KW-0547">Nucleotide-binding</keyword>
<keyword id="KW-0648">Protein biosynthesis</keyword>
<accession>Q46175</accession>
<gene>
    <name evidence="1" type="primary">aspS</name>
    <name type="ordered locus">CCA_00077</name>
</gene>
<name>SYDND_CHLCV</name>